<sequence length="98" mass="10791">MPVVYVNIFLAFIVSLMGLLVYRSHLMSSLLCLEGMMLSLFVMLTVTVLNNHFTLANMAPIILLVFAACEAALGLSLLVMVSNTYGTDYVQNLNLLQC</sequence>
<keyword id="KW-0249">Electron transport</keyword>
<keyword id="KW-0472">Membrane</keyword>
<keyword id="KW-0496">Mitochondrion</keyword>
<keyword id="KW-0999">Mitochondrion inner membrane</keyword>
<keyword id="KW-0520">NAD</keyword>
<keyword id="KW-0679">Respiratory chain</keyword>
<keyword id="KW-1278">Translocase</keyword>
<keyword id="KW-0812">Transmembrane</keyword>
<keyword id="KW-1133">Transmembrane helix</keyword>
<keyword id="KW-0813">Transport</keyword>
<keyword id="KW-0830">Ubiquinone</keyword>
<proteinExistence type="inferred from homology"/>
<gene>
    <name type="primary">MT-ND4L</name>
    <name type="synonym">MTND4L</name>
    <name type="synonym">NADH4L</name>
    <name type="synonym">ND4L</name>
</gene>
<name>NU4LM_URSAR</name>
<evidence type="ECO:0000250" key="1">
    <source>
        <dbReference type="UniProtKB" id="P03901"/>
    </source>
</evidence>
<evidence type="ECO:0000250" key="2">
    <source>
        <dbReference type="UniProtKB" id="P03902"/>
    </source>
</evidence>
<evidence type="ECO:0000255" key="3"/>
<evidence type="ECO:0000305" key="4"/>
<accession>Q8SJH9</accession>
<comment type="function">
    <text evidence="1">Core subunit of the mitochondrial membrane respiratory chain NADH dehydrogenase (Complex I) which catalyzes electron transfer from NADH through the respiratory chain, using ubiquinone as an electron acceptor. Part of the enzyme membrane arm which is embedded in the lipid bilayer and involved in proton translocation.</text>
</comment>
<comment type="catalytic activity">
    <reaction evidence="1">
        <text>a ubiquinone + NADH + 5 H(+)(in) = a ubiquinol + NAD(+) + 4 H(+)(out)</text>
        <dbReference type="Rhea" id="RHEA:29091"/>
        <dbReference type="Rhea" id="RHEA-COMP:9565"/>
        <dbReference type="Rhea" id="RHEA-COMP:9566"/>
        <dbReference type="ChEBI" id="CHEBI:15378"/>
        <dbReference type="ChEBI" id="CHEBI:16389"/>
        <dbReference type="ChEBI" id="CHEBI:17976"/>
        <dbReference type="ChEBI" id="CHEBI:57540"/>
        <dbReference type="ChEBI" id="CHEBI:57945"/>
        <dbReference type="EC" id="7.1.1.2"/>
    </reaction>
    <physiologicalReaction direction="left-to-right" evidence="1">
        <dbReference type="Rhea" id="RHEA:29092"/>
    </physiologicalReaction>
</comment>
<comment type="subunit">
    <text evidence="2">Core subunit of respiratory chain NADH dehydrogenase (Complex I) which is composed of 45 different subunits.</text>
</comment>
<comment type="subcellular location">
    <subcellularLocation>
        <location evidence="2">Mitochondrion inner membrane</location>
        <topology evidence="3">Multi-pass membrane protein</topology>
    </subcellularLocation>
</comment>
<comment type="similarity">
    <text evidence="4">Belongs to the complex I subunit 4L family.</text>
</comment>
<geneLocation type="mitochondrion"/>
<dbReference type="EC" id="7.1.1.2"/>
<dbReference type="EMBL" id="AF303110">
    <property type="protein sequence ID" value="AAL85176.1"/>
    <property type="molecule type" value="Genomic_DNA"/>
</dbReference>
<dbReference type="RefSeq" id="NP_597976.1">
    <property type="nucleotide sequence ID" value="NC_003427.1"/>
</dbReference>
<dbReference type="SMR" id="Q8SJH9"/>
<dbReference type="GeneID" id="804850"/>
<dbReference type="CTD" id="4539"/>
<dbReference type="OrthoDB" id="19063at33554"/>
<dbReference type="GO" id="GO:0005743">
    <property type="term" value="C:mitochondrial inner membrane"/>
    <property type="evidence" value="ECO:0000250"/>
    <property type="project" value="UniProtKB"/>
</dbReference>
<dbReference type="GO" id="GO:0045271">
    <property type="term" value="C:respiratory chain complex I"/>
    <property type="evidence" value="ECO:0000250"/>
    <property type="project" value="UniProtKB"/>
</dbReference>
<dbReference type="GO" id="GO:0008137">
    <property type="term" value="F:NADH dehydrogenase (ubiquinone) activity"/>
    <property type="evidence" value="ECO:0000250"/>
    <property type="project" value="UniProtKB"/>
</dbReference>
<dbReference type="GO" id="GO:0042773">
    <property type="term" value="P:ATP synthesis coupled electron transport"/>
    <property type="evidence" value="ECO:0007669"/>
    <property type="project" value="InterPro"/>
</dbReference>
<dbReference type="FunFam" id="1.10.287.3510:FF:000002">
    <property type="entry name" value="NADH-ubiquinone oxidoreductase chain 4L"/>
    <property type="match status" value="1"/>
</dbReference>
<dbReference type="Gene3D" id="1.10.287.3510">
    <property type="match status" value="1"/>
</dbReference>
<dbReference type="InterPro" id="IPR001133">
    <property type="entry name" value="NADH_UbQ_OxRdtase_chain4L/K"/>
</dbReference>
<dbReference type="InterPro" id="IPR039428">
    <property type="entry name" value="NUOK/Mnh_C1-like"/>
</dbReference>
<dbReference type="PANTHER" id="PTHR11434:SF0">
    <property type="entry name" value="NADH-UBIQUINONE OXIDOREDUCTASE CHAIN 4L"/>
    <property type="match status" value="1"/>
</dbReference>
<dbReference type="PANTHER" id="PTHR11434">
    <property type="entry name" value="NADH-UBIQUINONE OXIDOREDUCTASE SUBUNIT ND4L"/>
    <property type="match status" value="1"/>
</dbReference>
<dbReference type="Pfam" id="PF00420">
    <property type="entry name" value="Oxidored_q2"/>
    <property type="match status" value="1"/>
</dbReference>
<organism>
    <name type="scientific">Ursus arctos</name>
    <name type="common">Brown bear</name>
    <name type="synonym">Grizzly bear</name>
    <dbReference type="NCBI Taxonomy" id="9644"/>
    <lineage>
        <taxon>Eukaryota</taxon>
        <taxon>Metazoa</taxon>
        <taxon>Chordata</taxon>
        <taxon>Craniata</taxon>
        <taxon>Vertebrata</taxon>
        <taxon>Euteleostomi</taxon>
        <taxon>Mammalia</taxon>
        <taxon>Eutheria</taxon>
        <taxon>Laurasiatheria</taxon>
        <taxon>Carnivora</taxon>
        <taxon>Caniformia</taxon>
        <taxon>Ursidae</taxon>
        <taxon>Ursus</taxon>
    </lineage>
</organism>
<feature type="chain" id="PRO_0000275138" description="NADH-ubiquinone oxidoreductase chain 4L">
    <location>
        <begin position="1"/>
        <end position="98"/>
    </location>
</feature>
<feature type="transmembrane region" description="Helical" evidence="3">
    <location>
        <begin position="1"/>
        <end position="21"/>
    </location>
</feature>
<feature type="transmembrane region" description="Helical" evidence="3">
    <location>
        <begin position="29"/>
        <end position="49"/>
    </location>
</feature>
<feature type="transmembrane region" description="Helical" evidence="3">
    <location>
        <begin position="61"/>
        <end position="81"/>
    </location>
</feature>
<protein>
    <recommendedName>
        <fullName>NADH-ubiquinone oxidoreductase chain 4L</fullName>
        <ecNumber>7.1.1.2</ecNumber>
    </recommendedName>
    <alternativeName>
        <fullName>NADH dehydrogenase subunit 4L</fullName>
    </alternativeName>
</protein>
<reference key="1">
    <citation type="journal article" date="2002" name="Mol. Biol. Evol.">
        <title>Conserved primers for rapid sequencing of the complete mitochondrial genome from carnivores, applied to three species of bears.</title>
        <authorList>
            <person name="Delisle I."/>
            <person name="Strobeck C."/>
        </authorList>
    </citation>
    <scope>NUCLEOTIDE SEQUENCE [GENOMIC DNA]</scope>
</reference>